<evidence type="ECO:0000255" key="1">
    <source>
        <dbReference type="HAMAP-Rule" id="MF_01365"/>
    </source>
</evidence>
<evidence type="ECO:0000305" key="2"/>
<organism>
    <name type="scientific">Dehalococcoides mccartyi (strain ATCC BAA-2266 / KCTC 15142 / 195)</name>
    <name type="common">Dehalococcoides ethenogenes (strain 195)</name>
    <dbReference type="NCBI Taxonomy" id="243164"/>
    <lineage>
        <taxon>Bacteria</taxon>
        <taxon>Bacillati</taxon>
        <taxon>Chloroflexota</taxon>
        <taxon>Dehalococcoidia</taxon>
        <taxon>Dehalococcoidales</taxon>
        <taxon>Dehalococcoidaceae</taxon>
        <taxon>Dehalococcoides</taxon>
    </lineage>
</organism>
<sequence length="182" mass="19515">MSRIGKMPIKVPPGVTVDIKGNDVTVKGPKGTLNRTFRPEVTITRDGDYLVVAPVGTDKAARSFFGLSRTLLDNMIVGVKDGFDKNLEIVGVGMRADKDGNNIIFKVGYSHTVTVAPPAGITLSVDGTTKVKVSGINKEEVSQMAAEIRSIRKPDHYMGKGIRYAGEYVRIKPGKAIGKGAK</sequence>
<accession>Q3Z966</accession>
<reference key="1">
    <citation type="journal article" date="2005" name="Science">
        <title>Genome sequence of the PCE-dechlorinating bacterium Dehalococcoides ethenogenes.</title>
        <authorList>
            <person name="Seshadri R."/>
            <person name="Adrian L."/>
            <person name="Fouts D.E."/>
            <person name="Eisen J.A."/>
            <person name="Phillippy A.M."/>
            <person name="Methe B.A."/>
            <person name="Ward N.L."/>
            <person name="Nelson W.C."/>
            <person name="DeBoy R.T."/>
            <person name="Khouri H.M."/>
            <person name="Kolonay J.F."/>
            <person name="Dodson R.J."/>
            <person name="Daugherty S.C."/>
            <person name="Brinkac L.M."/>
            <person name="Sullivan S.A."/>
            <person name="Madupu R."/>
            <person name="Nelson K.E."/>
            <person name="Kang K.H."/>
            <person name="Impraim M."/>
            <person name="Tran K."/>
            <person name="Robinson J.M."/>
            <person name="Forberger H.A."/>
            <person name="Fraser C.M."/>
            <person name="Zinder S.H."/>
            <person name="Heidelberg J.F."/>
        </authorList>
    </citation>
    <scope>NUCLEOTIDE SEQUENCE [LARGE SCALE GENOMIC DNA]</scope>
    <source>
        <strain>ATCC BAA-2266 / KCTC 15142 / 195</strain>
    </source>
</reference>
<name>RL6_DEHM1</name>
<keyword id="KW-0687">Ribonucleoprotein</keyword>
<keyword id="KW-0689">Ribosomal protein</keyword>
<keyword id="KW-0694">RNA-binding</keyword>
<keyword id="KW-0699">rRNA-binding</keyword>
<protein>
    <recommendedName>
        <fullName evidence="1">Large ribosomal subunit protein uL6</fullName>
    </recommendedName>
    <alternativeName>
        <fullName evidence="2">50S ribosomal protein L6</fullName>
    </alternativeName>
</protein>
<dbReference type="EMBL" id="CP000027">
    <property type="protein sequence ID" value="AAW40277.1"/>
    <property type="molecule type" value="Genomic_DNA"/>
</dbReference>
<dbReference type="RefSeq" id="WP_010936266.1">
    <property type="nucleotide sequence ID" value="NC_002936.3"/>
</dbReference>
<dbReference type="SMR" id="Q3Z966"/>
<dbReference type="FunCoup" id="Q3Z966">
    <property type="interactions" value="353"/>
</dbReference>
<dbReference type="STRING" id="243164.DET0489"/>
<dbReference type="GeneID" id="3230241"/>
<dbReference type="KEGG" id="det:DET0489"/>
<dbReference type="PATRIC" id="fig|243164.10.peg.467"/>
<dbReference type="eggNOG" id="COG0097">
    <property type="taxonomic scope" value="Bacteria"/>
</dbReference>
<dbReference type="HOGENOM" id="CLU_065464_1_2_0"/>
<dbReference type="InParanoid" id="Q3Z966"/>
<dbReference type="Proteomes" id="UP000008289">
    <property type="component" value="Chromosome"/>
</dbReference>
<dbReference type="GO" id="GO:0022625">
    <property type="term" value="C:cytosolic large ribosomal subunit"/>
    <property type="evidence" value="ECO:0007669"/>
    <property type="project" value="TreeGrafter"/>
</dbReference>
<dbReference type="GO" id="GO:0019843">
    <property type="term" value="F:rRNA binding"/>
    <property type="evidence" value="ECO:0007669"/>
    <property type="project" value="UniProtKB-UniRule"/>
</dbReference>
<dbReference type="GO" id="GO:0003735">
    <property type="term" value="F:structural constituent of ribosome"/>
    <property type="evidence" value="ECO:0007669"/>
    <property type="project" value="InterPro"/>
</dbReference>
<dbReference type="GO" id="GO:0002181">
    <property type="term" value="P:cytoplasmic translation"/>
    <property type="evidence" value="ECO:0007669"/>
    <property type="project" value="TreeGrafter"/>
</dbReference>
<dbReference type="FunFam" id="3.90.930.12:FF:000002">
    <property type="entry name" value="50S ribosomal protein L6"/>
    <property type="match status" value="1"/>
</dbReference>
<dbReference type="Gene3D" id="3.90.930.12">
    <property type="entry name" value="Ribosomal protein L6, alpha-beta domain"/>
    <property type="match status" value="2"/>
</dbReference>
<dbReference type="HAMAP" id="MF_01365_B">
    <property type="entry name" value="Ribosomal_uL6_B"/>
    <property type="match status" value="1"/>
</dbReference>
<dbReference type="InterPro" id="IPR000702">
    <property type="entry name" value="Ribosomal_uL6-like"/>
</dbReference>
<dbReference type="InterPro" id="IPR036789">
    <property type="entry name" value="Ribosomal_uL6-like_a/b-dom_sf"/>
</dbReference>
<dbReference type="InterPro" id="IPR020040">
    <property type="entry name" value="Ribosomal_uL6_a/b-dom"/>
</dbReference>
<dbReference type="InterPro" id="IPR019906">
    <property type="entry name" value="Ribosomal_uL6_bac-type"/>
</dbReference>
<dbReference type="NCBIfam" id="TIGR03654">
    <property type="entry name" value="L6_bact"/>
    <property type="match status" value="1"/>
</dbReference>
<dbReference type="PANTHER" id="PTHR11655">
    <property type="entry name" value="60S/50S RIBOSOMAL PROTEIN L6/L9"/>
    <property type="match status" value="1"/>
</dbReference>
<dbReference type="PANTHER" id="PTHR11655:SF14">
    <property type="entry name" value="LARGE RIBOSOMAL SUBUNIT PROTEIN UL6M"/>
    <property type="match status" value="1"/>
</dbReference>
<dbReference type="Pfam" id="PF00347">
    <property type="entry name" value="Ribosomal_L6"/>
    <property type="match status" value="2"/>
</dbReference>
<dbReference type="PIRSF" id="PIRSF002162">
    <property type="entry name" value="Ribosomal_L6"/>
    <property type="match status" value="1"/>
</dbReference>
<dbReference type="PRINTS" id="PR00059">
    <property type="entry name" value="RIBOSOMALL6"/>
</dbReference>
<dbReference type="SUPFAM" id="SSF56053">
    <property type="entry name" value="Ribosomal protein L6"/>
    <property type="match status" value="2"/>
</dbReference>
<comment type="function">
    <text evidence="1">This protein binds to the 23S rRNA, and is important in its secondary structure. It is located near the subunit interface in the base of the L7/L12 stalk, and near the tRNA binding site of the peptidyltransferase center.</text>
</comment>
<comment type="subunit">
    <text evidence="1">Part of the 50S ribosomal subunit.</text>
</comment>
<comment type="similarity">
    <text evidence="1">Belongs to the universal ribosomal protein uL6 family.</text>
</comment>
<proteinExistence type="inferred from homology"/>
<feature type="chain" id="PRO_0000260861" description="Large ribosomal subunit protein uL6">
    <location>
        <begin position="1"/>
        <end position="182"/>
    </location>
</feature>
<gene>
    <name evidence="1" type="primary">rplF</name>
    <name type="ordered locus">DET0489</name>
</gene>